<protein>
    <recommendedName>
        <fullName evidence="1">Leucyl/phenylalanyl-tRNA--protein transferase</fullName>
        <ecNumber evidence="1">2.3.2.6</ecNumber>
    </recommendedName>
    <alternativeName>
        <fullName evidence="1">L/F-transferase</fullName>
    </alternativeName>
    <alternativeName>
        <fullName evidence="1">Leucyltransferase</fullName>
    </alternativeName>
    <alternativeName>
        <fullName evidence="1">Phenyalanyltransferase</fullName>
    </alternativeName>
</protein>
<sequence>MIAWLDPQDPFPPVEHALGPDSEAPGLLAASRELSPQRLLLAYRQGIFPWYSSGQPVLWWSTDPRMVLAPPALRVSVNLRKTLRRVLRDADWEIRVDHDFLAVMRACASTPREGQDGTWITDAIIAAYGALHRNGLAHSVESWYRGERVGGLYGVALGRMFFGESMFAHRTDASKIALAALCAFLGNHGVAMIDCQQETDHLASLGARPIPRAEFVAHVRAATAQPAISPWRFDKSVLERWAGTPAAPAA</sequence>
<feature type="chain" id="PRO_1000131915" description="Leucyl/phenylalanyl-tRNA--protein transferase">
    <location>
        <begin position="1"/>
        <end position="250"/>
    </location>
</feature>
<reference key="1">
    <citation type="journal article" date="2008" name="Genome Res.">
        <title>Genome sequence of the beta-rhizobium Cupriavidus taiwanensis and comparative genomics of rhizobia.</title>
        <authorList>
            <person name="Amadou C."/>
            <person name="Pascal G."/>
            <person name="Mangenot S."/>
            <person name="Glew M."/>
            <person name="Bontemps C."/>
            <person name="Capela D."/>
            <person name="Carrere S."/>
            <person name="Cruveiller S."/>
            <person name="Dossat C."/>
            <person name="Lajus A."/>
            <person name="Marchetti M."/>
            <person name="Poinsot V."/>
            <person name="Rouy Z."/>
            <person name="Servin B."/>
            <person name="Saad M."/>
            <person name="Schenowitz C."/>
            <person name="Barbe V."/>
            <person name="Batut J."/>
            <person name="Medigue C."/>
            <person name="Masson-Boivin C."/>
        </authorList>
    </citation>
    <scope>NUCLEOTIDE SEQUENCE [LARGE SCALE GENOMIC DNA]</scope>
    <source>
        <strain>DSM 17343 / BCRC 17206 / CCUG 44338 / CIP 107171 / LMG 19424 / R1</strain>
    </source>
</reference>
<accession>B3R4T2</accession>
<comment type="function">
    <text evidence="1">Functions in the N-end rule pathway of protein degradation where it conjugates Leu, Phe and, less efficiently, Met from aminoacyl-tRNAs to the N-termini of proteins containing an N-terminal arginine or lysine.</text>
</comment>
<comment type="catalytic activity">
    <reaction evidence="1">
        <text>N-terminal L-lysyl-[protein] + L-leucyl-tRNA(Leu) = N-terminal L-leucyl-L-lysyl-[protein] + tRNA(Leu) + H(+)</text>
        <dbReference type="Rhea" id="RHEA:12340"/>
        <dbReference type="Rhea" id="RHEA-COMP:9613"/>
        <dbReference type="Rhea" id="RHEA-COMP:9622"/>
        <dbReference type="Rhea" id="RHEA-COMP:12670"/>
        <dbReference type="Rhea" id="RHEA-COMP:12671"/>
        <dbReference type="ChEBI" id="CHEBI:15378"/>
        <dbReference type="ChEBI" id="CHEBI:65249"/>
        <dbReference type="ChEBI" id="CHEBI:78442"/>
        <dbReference type="ChEBI" id="CHEBI:78494"/>
        <dbReference type="ChEBI" id="CHEBI:133043"/>
        <dbReference type="EC" id="2.3.2.6"/>
    </reaction>
</comment>
<comment type="catalytic activity">
    <reaction evidence="1">
        <text>N-terminal L-arginyl-[protein] + L-leucyl-tRNA(Leu) = N-terminal L-leucyl-L-arginyl-[protein] + tRNA(Leu) + H(+)</text>
        <dbReference type="Rhea" id="RHEA:50416"/>
        <dbReference type="Rhea" id="RHEA-COMP:9613"/>
        <dbReference type="Rhea" id="RHEA-COMP:9622"/>
        <dbReference type="Rhea" id="RHEA-COMP:12672"/>
        <dbReference type="Rhea" id="RHEA-COMP:12673"/>
        <dbReference type="ChEBI" id="CHEBI:15378"/>
        <dbReference type="ChEBI" id="CHEBI:64719"/>
        <dbReference type="ChEBI" id="CHEBI:78442"/>
        <dbReference type="ChEBI" id="CHEBI:78494"/>
        <dbReference type="ChEBI" id="CHEBI:133044"/>
        <dbReference type="EC" id="2.3.2.6"/>
    </reaction>
</comment>
<comment type="catalytic activity">
    <reaction evidence="1">
        <text>L-phenylalanyl-tRNA(Phe) + an N-terminal L-alpha-aminoacyl-[protein] = an N-terminal L-phenylalanyl-L-alpha-aminoacyl-[protein] + tRNA(Phe)</text>
        <dbReference type="Rhea" id="RHEA:43632"/>
        <dbReference type="Rhea" id="RHEA-COMP:9668"/>
        <dbReference type="Rhea" id="RHEA-COMP:9699"/>
        <dbReference type="Rhea" id="RHEA-COMP:10636"/>
        <dbReference type="Rhea" id="RHEA-COMP:10637"/>
        <dbReference type="ChEBI" id="CHEBI:78442"/>
        <dbReference type="ChEBI" id="CHEBI:78531"/>
        <dbReference type="ChEBI" id="CHEBI:78597"/>
        <dbReference type="ChEBI" id="CHEBI:83561"/>
        <dbReference type="EC" id="2.3.2.6"/>
    </reaction>
</comment>
<comment type="subcellular location">
    <subcellularLocation>
        <location evidence="1">Cytoplasm</location>
    </subcellularLocation>
</comment>
<comment type="similarity">
    <text evidence="1">Belongs to the L/F-transferase family.</text>
</comment>
<organism>
    <name type="scientific">Cupriavidus taiwanensis (strain DSM 17343 / BCRC 17206 / CCUG 44338 / CIP 107171 / LMG 19424 / R1)</name>
    <name type="common">Ralstonia taiwanensis (strain LMG 19424)</name>
    <dbReference type="NCBI Taxonomy" id="977880"/>
    <lineage>
        <taxon>Bacteria</taxon>
        <taxon>Pseudomonadati</taxon>
        <taxon>Pseudomonadota</taxon>
        <taxon>Betaproteobacteria</taxon>
        <taxon>Burkholderiales</taxon>
        <taxon>Burkholderiaceae</taxon>
        <taxon>Cupriavidus</taxon>
    </lineage>
</organism>
<dbReference type="EC" id="2.3.2.6" evidence="1"/>
<dbReference type="EMBL" id="CU633749">
    <property type="protein sequence ID" value="CAQ69275.1"/>
    <property type="molecule type" value="Genomic_DNA"/>
</dbReference>
<dbReference type="RefSeq" id="WP_012352601.1">
    <property type="nucleotide sequence ID" value="NC_010528.1"/>
</dbReference>
<dbReference type="SMR" id="B3R4T2"/>
<dbReference type="GeneID" id="29760752"/>
<dbReference type="KEGG" id="cti:RALTA_A1316"/>
<dbReference type="eggNOG" id="COG2360">
    <property type="taxonomic scope" value="Bacteria"/>
</dbReference>
<dbReference type="HOGENOM" id="CLU_075045_0_0_4"/>
<dbReference type="BioCyc" id="CTAI977880:RALTA_RS06305-MONOMER"/>
<dbReference type="Proteomes" id="UP000001692">
    <property type="component" value="Chromosome 1"/>
</dbReference>
<dbReference type="GO" id="GO:0005737">
    <property type="term" value="C:cytoplasm"/>
    <property type="evidence" value="ECO:0007669"/>
    <property type="project" value="UniProtKB-SubCell"/>
</dbReference>
<dbReference type="GO" id="GO:0008914">
    <property type="term" value="F:leucyl-tRNA--protein transferase activity"/>
    <property type="evidence" value="ECO:0007669"/>
    <property type="project" value="UniProtKB-UniRule"/>
</dbReference>
<dbReference type="GO" id="GO:0030163">
    <property type="term" value="P:protein catabolic process"/>
    <property type="evidence" value="ECO:0007669"/>
    <property type="project" value="UniProtKB-UniRule"/>
</dbReference>
<dbReference type="Gene3D" id="3.40.630.70">
    <property type="entry name" value="Leucyl/phenylalanyl-tRNA-protein transferase, C-terminal domain"/>
    <property type="match status" value="1"/>
</dbReference>
<dbReference type="Gene3D" id="3.30.70.3550">
    <property type="entry name" value="Leucyl/phenylalanyl-tRNA-protein transferase, N-terminal domain"/>
    <property type="match status" value="1"/>
</dbReference>
<dbReference type="HAMAP" id="MF_00688">
    <property type="entry name" value="Leu_Phe_trans"/>
    <property type="match status" value="1"/>
</dbReference>
<dbReference type="InterPro" id="IPR016181">
    <property type="entry name" value="Acyl_CoA_acyltransferase"/>
</dbReference>
<dbReference type="InterPro" id="IPR004616">
    <property type="entry name" value="Leu/Phe-tRNA_Trfase"/>
</dbReference>
<dbReference type="InterPro" id="IPR042203">
    <property type="entry name" value="Leu/Phe-tRNA_Trfase_C"/>
</dbReference>
<dbReference type="InterPro" id="IPR042221">
    <property type="entry name" value="Leu/Phe-tRNA_Trfase_N"/>
</dbReference>
<dbReference type="NCBIfam" id="TIGR00667">
    <property type="entry name" value="aat"/>
    <property type="match status" value="1"/>
</dbReference>
<dbReference type="PANTHER" id="PTHR30098">
    <property type="entry name" value="LEUCYL/PHENYLALANYL-TRNA--PROTEIN TRANSFERASE"/>
    <property type="match status" value="1"/>
</dbReference>
<dbReference type="PANTHER" id="PTHR30098:SF2">
    <property type="entry name" value="LEUCYL_PHENYLALANYL-TRNA--PROTEIN TRANSFERASE"/>
    <property type="match status" value="1"/>
</dbReference>
<dbReference type="Pfam" id="PF03588">
    <property type="entry name" value="Leu_Phe_trans"/>
    <property type="match status" value="1"/>
</dbReference>
<dbReference type="SUPFAM" id="SSF55729">
    <property type="entry name" value="Acyl-CoA N-acyltransferases (Nat)"/>
    <property type="match status" value="1"/>
</dbReference>
<gene>
    <name evidence="1" type="primary">aat</name>
    <name type="ordered locus">RALTA_A1316</name>
</gene>
<name>LFTR_CUPTR</name>
<keyword id="KW-0012">Acyltransferase</keyword>
<keyword id="KW-0963">Cytoplasm</keyword>
<keyword id="KW-0808">Transferase</keyword>
<evidence type="ECO:0000255" key="1">
    <source>
        <dbReference type="HAMAP-Rule" id="MF_00688"/>
    </source>
</evidence>
<proteinExistence type="inferred from homology"/>